<organism>
    <name type="scientific">Agrobacterium fabrum (strain C58 / ATCC 33970)</name>
    <name type="common">Agrobacterium tumefaciens (strain C58)</name>
    <dbReference type="NCBI Taxonomy" id="176299"/>
    <lineage>
        <taxon>Bacteria</taxon>
        <taxon>Pseudomonadati</taxon>
        <taxon>Pseudomonadota</taxon>
        <taxon>Alphaproteobacteria</taxon>
        <taxon>Hyphomicrobiales</taxon>
        <taxon>Rhizobiaceae</taxon>
        <taxon>Rhizobium/Agrobacterium group</taxon>
        <taxon>Agrobacterium</taxon>
        <taxon>Agrobacterium tumefaciens complex</taxon>
    </lineage>
</organism>
<dbReference type="EC" id="1.14.-.-" evidence="1"/>
<dbReference type="EMBL" id="AE007870">
    <property type="protein sequence ID" value="AAK88951.2"/>
    <property type="molecule type" value="Genomic_DNA"/>
</dbReference>
<dbReference type="PIR" id="AG3108">
    <property type="entry name" value="AG3108"/>
</dbReference>
<dbReference type="PIR" id="E98178">
    <property type="entry name" value="E98178"/>
</dbReference>
<dbReference type="RefSeq" id="NP_356166.2">
    <property type="nucleotide sequence ID" value="NC_003063.2"/>
</dbReference>
<dbReference type="RefSeq" id="WP_010973898.1">
    <property type="nucleotide sequence ID" value="NC_003063.2"/>
</dbReference>
<dbReference type="SMR" id="Q8U7F8"/>
<dbReference type="STRING" id="176299.Atu4491"/>
<dbReference type="EnsemblBacteria" id="AAK88951">
    <property type="protein sequence ID" value="AAK88951"/>
    <property type="gene ID" value="Atu4491"/>
</dbReference>
<dbReference type="GeneID" id="1136365"/>
<dbReference type="KEGG" id="atu:Atu4491"/>
<dbReference type="PATRIC" id="fig|176299.10.peg.4299"/>
<dbReference type="eggNOG" id="COG1054">
    <property type="taxonomic scope" value="Bacteria"/>
</dbReference>
<dbReference type="HOGENOM" id="CLU_038878_0_0_5"/>
<dbReference type="OrthoDB" id="9778326at2"/>
<dbReference type="PhylomeDB" id="Q8U7F8"/>
<dbReference type="BioCyc" id="AGRO:ATU4491-MONOMER"/>
<dbReference type="Proteomes" id="UP000000813">
    <property type="component" value="Chromosome linear"/>
</dbReference>
<dbReference type="GO" id="GO:0016705">
    <property type="term" value="F:oxidoreductase activity, acting on paired donors, with incorporation or reduction of molecular oxygen"/>
    <property type="evidence" value="ECO:0007669"/>
    <property type="project" value="UniProtKB-UniRule"/>
</dbReference>
<dbReference type="GO" id="GO:0006400">
    <property type="term" value="P:tRNA modification"/>
    <property type="evidence" value="ECO:0007669"/>
    <property type="project" value="UniProtKB-UniRule"/>
</dbReference>
<dbReference type="CDD" id="cd01518">
    <property type="entry name" value="RHOD_YceA"/>
    <property type="match status" value="1"/>
</dbReference>
<dbReference type="Gene3D" id="3.30.70.100">
    <property type="match status" value="1"/>
</dbReference>
<dbReference type="Gene3D" id="3.40.250.10">
    <property type="entry name" value="Rhodanese-like domain"/>
    <property type="match status" value="1"/>
</dbReference>
<dbReference type="HAMAP" id="MF_00469">
    <property type="entry name" value="TrhO"/>
    <property type="match status" value="1"/>
</dbReference>
<dbReference type="InterPro" id="IPR001763">
    <property type="entry name" value="Rhodanese-like_dom"/>
</dbReference>
<dbReference type="InterPro" id="IPR036873">
    <property type="entry name" value="Rhodanese-like_dom_sf"/>
</dbReference>
<dbReference type="InterPro" id="IPR020936">
    <property type="entry name" value="TrhO"/>
</dbReference>
<dbReference type="InterPro" id="IPR040503">
    <property type="entry name" value="TRHO_N"/>
</dbReference>
<dbReference type="NCBIfam" id="NF001136">
    <property type="entry name" value="PRK00142.1-4"/>
    <property type="match status" value="1"/>
</dbReference>
<dbReference type="PANTHER" id="PTHR43268:SF3">
    <property type="entry name" value="RHODANESE-LIKE DOMAIN-CONTAINING PROTEIN 7-RELATED"/>
    <property type="match status" value="1"/>
</dbReference>
<dbReference type="PANTHER" id="PTHR43268">
    <property type="entry name" value="THIOSULFATE SULFURTRANSFERASE/RHODANESE-LIKE DOMAIN-CONTAINING PROTEIN 2"/>
    <property type="match status" value="1"/>
</dbReference>
<dbReference type="Pfam" id="PF00581">
    <property type="entry name" value="Rhodanese"/>
    <property type="match status" value="1"/>
</dbReference>
<dbReference type="Pfam" id="PF17773">
    <property type="entry name" value="UPF0176_N"/>
    <property type="match status" value="1"/>
</dbReference>
<dbReference type="SMART" id="SM00450">
    <property type="entry name" value="RHOD"/>
    <property type="match status" value="1"/>
</dbReference>
<dbReference type="SUPFAM" id="SSF52821">
    <property type="entry name" value="Rhodanese/Cell cycle control phosphatase"/>
    <property type="match status" value="1"/>
</dbReference>
<dbReference type="PROSITE" id="PS50206">
    <property type="entry name" value="RHODANESE_3"/>
    <property type="match status" value="1"/>
</dbReference>
<protein>
    <recommendedName>
        <fullName evidence="1">tRNA uridine(34) hydroxylase</fullName>
        <ecNumber evidence="1">1.14.-.-</ecNumber>
    </recommendedName>
    <alternativeName>
        <fullName evidence="1">tRNA hydroxylation protein O</fullName>
    </alternativeName>
</protein>
<name>TRHO_AGRFC</name>
<evidence type="ECO:0000255" key="1">
    <source>
        <dbReference type="HAMAP-Rule" id="MF_00469"/>
    </source>
</evidence>
<feature type="chain" id="PRO_0000161434" description="tRNA uridine(34) hydroxylase">
    <location>
        <begin position="1"/>
        <end position="314"/>
    </location>
</feature>
<feature type="domain" description="Rhodanese" evidence="1">
    <location>
        <begin position="135"/>
        <end position="229"/>
    </location>
</feature>
<feature type="active site" description="Cysteine persulfide intermediate" evidence="1">
    <location>
        <position position="189"/>
    </location>
</feature>
<comment type="function">
    <text evidence="1">Catalyzes oxygen-dependent 5-hydroxyuridine (ho5U) modification at position 34 in tRNAs.</text>
</comment>
<comment type="catalytic activity">
    <reaction evidence="1">
        <text>uridine(34) in tRNA + AH2 + O2 = 5-hydroxyuridine(34) in tRNA + A + H2O</text>
        <dbReference type="Rhea" id="RHEA:64224"/>
        <dbReference type="Rhea" id="RHEA-COMP:11727"/>
        <dbReference type="Rhea" id="RHEA-COMP:13381"/>
        <dbReference type="ChEBI" id="CHEBI:13193"/>
        <dbReference type="ChEBI" id="CHEBI:15377"/>
        <dbReference type="ChEBI" id="CHEBI:15379"/>
        <dbReference type="ChEBI" id="CHEBI:17499"/>
        <dbReference type="ChEBI" id="CHEBI:65315"/>
        <dbReference type="ChEBI" id="CHEBI:136877"/>
    </reaction>
</comment>
<comment type="similarity">
    <text evidence="1">Belongs to the TrhO family.</text>
</comment>
<sequence>MTDTTILPRPEVSGDFLVAALYHFARLPRFESLREQLFELCQKNGVKGTLLLAAEGINGTIAGPDAGVQAVLSFLRAQPEFAALEHKESRASHMPFVRLKVKLKKEIVTMGVPDIDPNRIVGTYVDPRDWNALISDPDTIVIDTRNDYETAIGVFKGAVDPQTKTFREFPDWVKNNPGLHNKPKIAMYCTGGIRCEKATAFMKEQGFDEVYHLKGGILKYLEEVPEEESLWEGACFVFDERVSVVHGLAEGDHQLCHACRNPITPDVRLSPKFEEGVSCPSCYDERSEDDRQRFRDRQQQIELAKTRGERHLGR</sequence>
<gene>
    <name evidence="1" type="primary">trhO</name>
    <name type="ordered locus">Atu4491</name>
    <name type="ORF">AGR_L_756</name>
</gene>
<reference key="1">
    <citation type="journal article" date="2001" name="Science">
        <title>The genome of the natural genetic engineer Agrobacterium tumefaciens C58.</title>
        <authorList>
            <person name="Wood D.W."/>
            <person name="Setubal J.C."/>
            <person name="Kaul R."/>
            <person name="Monks D.E."/>
            <person name="Kitajima J.P."/>
            <person name="Okura V.K."/>
            <person name="Zhou Y."/>
            <person name="Chen L."/>
            <person name="Wood G.E."/>
            <person name="Almeida N.F. Jr."/>
            <person name="Woo L."/>
            <person name="Chen Y."/>
            <person name="Paulsen I.T."/>
            <person name="Eisen J.A."/>
            <person name="Karp P.D."/>
            <person name="Bovee D. Sr."/>
            <person name="Chapman P."/>
            <person name="Clendenning J."/>
            <person name="Deatherage G."/>
            <person name="Gillet W."/>
            <person name="Grant C."/>
            <person name="Kutyavin T."/>
            <person name="Levy R."/>
            <person name="Li M.-J."/>
            <person name="McClelland E."/>
            <person name="Palmieri A."/>
            <person name="Raymond C."/>
            <person name="Rouse G."/>
            <person name="Saenphimmachak C."/>
            <person name="Wu Z."/>
            <person name="Romero P."/>
            <person name="Gordon D."/>
            <person name="Zhang S."/>
            <person name="Yoo H."/>
            <person name="Tao Y."/>
            <person name="Biddle P."/>
            <person name="Jung M."/>
            <person name="Krespan W."/>
            <person name="Perry M."/>
            <person name="Gordon-Kamm B."/>
            <person name="Liao L."/>
            <person name="Kim S."/>
            <person name="Hendrick C."/>
            <person name="Zhao Z.-Y."/>
            <person name="Dolan M."/>
            <person name="Chumley F."/>
            <person name="Tingey S.V."/>
            <person name="Tomb J.-F."/>
            <person name="Gordon M.P."/>
            <person name="Olson M.V."/>
            <person name="Nester E.W."/>
        </authorList>
    </citation>
    <scope>NUCLEOTIDE SEQUENCE [LARGE SCALE GENOMIC DNA]</scope>
    <source>
        <strain>C58 / ATCC 33970</strain>
    </source>
</reference>
<reference key="2">
    <citation type="journal article" date="2001" name="Science">
        <title>Genome sequence of the plant pathogen and biotechnology agent Agrobacterium tumefaciens C58.</title>
        <authorList>
            <person name="Goodner B."/>
            <person name="Hinkle G."/>
            <person name="Gattung S."/>
            <person name="Miller N."/>
            <person name="Blanchard M."/>
            <person name="Qurollo B."/>
            <person name="Goldman B.S."/>
            <person name="Cao Y."/>
            <person name="Askenazi M."/>
            <person name="Halling C."/>
            <person name="Mullin L."/>
            <person name="Houmiel K."/>
            <person name="Gordon J."/>
            <person name="Vaudin M."/>
            <person name="Iartchouk O."/>
            <person name="Epp A."/>
            <person name="Liu F."/>
            <person name="Wollam C."/>
            <person name="Allinger M."/>
            <person name="Doughty D."/>
            <person name="Scott C."/>
            <person name="Lappas C."/>
            <person name="Markelz B."/>
            <person name="Flanagan C."/>
            <person name="Crowell C."/>
            <person name="Gurson J."/>
            <person name="Lomo C."/>
            <person name="Sear C."/>
            <person name="Strub G."/>
            <person name="Cielo C."/>
            <person name="Slater S."/>
        </authorList>
    </citation>
    <scope>NUCLEOTIDE SEQUENCE [LARGE SCALE GENOMIC DNA]</scope>
    <source>
        <strain>C58 / ATCC 33970</strain>
    </source>
</reference>
<proteinExistence type="inferred from homology"/>
<accession>Q8U7F8</accession>
<keyword id="KW-0560">Oxidoreductase</keyword>
<keyword id="KW-1185">Reference proteome</keyword>
<keyword id="KW-0819">tRNA processing</keyword>